<protein>
    <recommendedName>
        <fullName evidence="19">Glycine receptor subunit alpha-2</fullName>
    </recommendedName>
</protein>
<keyword id="KW-0002">3D-structure</keyword>
<keyword id="KW-0025">Alternative splicing</keyword>
<keyword id="KW-1003">Cell membrane</keyword>
<keyword id="KW-0966">Cell projection</keyword>
<keyword id="KW-0868">Chloride</keyword>
<keyword id="KW-0869">Chloride channel</keyword>
<keyword id="KW-0225">Disease variant</keyword>
<keyword id="KW-1015">Disulfide bond</keyword>
<keyword id="KW-0325">Glycoprotein</keyword>
<keyword id="KW-0991">Intellectual disability</keyword>
<keyword id="KW-0407">Ion channel</keyword>
<keyword id="KW-0406">Ion transport</keyword>
<keyword id="KW-1071">Ligand-gated ion channel</keyword>
<keyword id="KW-0472">Membrane</keyword>
<keyword id="KW-0479">Metal-binding</keyword>
<keyword id="KW-0628">Postsynaptic cell membrane</keyword>
<keyword id="KW-1267">Proteomics identification</keyword>
<keyword id="KW-0675">Receptor</keyword>
<keyword id="KW-1185">Reference proteome</keyword>
<keyword id="KW-0732">Signal</keyword>
<keyword id="KW-0770">Synapse</keyword>
<keyword id="KW-0812">Transmembrane</keyword>
<keyword id="KW-1133">Transmembrane helix</keyword>
<keyword id="KW-0813">Transport</keyword>
<keyword id="KW-0862">Zinc</keyword>
<name>GLRA2_HUMAN</name>
<organism>
    <name type="scientific">Homo sapiens</name>
    <name type="common">Human</name>
    <dbReference type="NCBI Taxonomy" id="9606"/>
    <lineage>
        <taxon>Eukaryota</taxon>
        <taxon>Metazoa</taxon>
        <taxon>Chordata</taxon>
        <taxon>Craniata</taxon>
        <taxon>Vertebrata</taxon>
        <taxon>Euteleostomi</taxon>
        <taxon>Mammalia</taxon>
        <taxon>Eutheria</taxon>
        <taxon>Euarchontoglires</taxon>
        <taxon>Primates</taxon>
        <taxon>Haplorrhini</taxon>
        <taxon>Catarrhini</taxon>
        <taxon>Hominidae</taxon>
        <taxon>Homo</taxon>
    </lineage>
</organism>
<comment type="function">
    <text evidence="2 4 5 7 8 9 12">Subunit of heteromeric glycine-gated chloride channels (PubMed:15302677, PubMed:16144831, PubMed:2155780, PubMed:23895467, PubMed:25445488, PubMed:26370147, PubMed:34473954). Plays a role in synaptic plasticity (By similarity). Contributes to the generation of inhibitory postsynaptic currents, and is involved in the down-regulation of neuronal excitability (PubMed:25445488). Plays a role in cellular responses to ethanol (PubMed:23895467).</text>
</comment>
<comment type="catalytic activity">
    <reaction evidence="4 5 7 8 9">
        <text>chloride(in) = chloride(out)</text>
        <dbReference type="Rhea" id="RHEA:29823"/>
        <dbReference type="ChEBI" id="CHEBI:17996"/>
    </reaction>
</comment>
<comment type="activity regulation">
    <text evidence="4 5 7 8 12">Channel opening is triggered by extracellular glycine (PubMed:15302677, PubMed:16144831, PubMed:2155780, PubMed:23895467, PubMed:34473954). Channel opening is also triggered by taurine and beta-alanine (PubMed:15302677). Inhibited by strychnine (PubMed:15302677, PubMed:2155780, PubMed:34473954). Inhibited by picrotoxin (PubMed:15302677). Channel activity is potentiated by 10-100 uM Zn(2+) (PubMed:15302677, PubMed:16144831, PubMed:23895467). Channel activity is marginally increased by 50 mM ethanol; it is strongly increased by a combination of 0.5 uM Zn(2+) and 50 mM ethanol (PubMed:23895467). Channel activity is inhibited by 100-1000 uM Zn(2+) (PubMed:15302677).</text>
</comment>
<comment type="biophysicochemical properties">
    <kinetics>
        <text>For isoform Alpha-2* homopentamers, a concentration of about 66 uM glycine results in half-maximal channel conductance. For isoform Alpha-2B homopentamers, a concentration of about 34 uM glycine results in half-maximal channel conductance.</text>
    </kinetics>
</comment>
<comment type="subunit">
    <text evidence="5 12 18">Interacts with GLRB (PubMed:16144831). Heteropentamer composed of GLRA2 and GLRB (PubMed:34473954). Functional GLRB-GLRA2 heteropentamers contain four GLRA2 subunits and one GLRB subunit, although alternative subunit composition cannot be excluded (PubMed:34473954). Homopentamer (in vitro) (PubMed:34473954). Both homopentamers and heteropentamers form functional ion channels, but their characteristics are subtly different (PubMed:15302677).</text>
</comment>
<comment type="subcellular location">
    <subcellularLocation>
        <location evidence="2">Postsynaptic cell membrane</location>
        <topology evidence="1">Multi-pass membrane protein</topology>
    </subcellularLocation>
    <subcellularLocation>
        <location evidence="2">Synapse</location>
    </subcellularLocation>
    <subcellularLocation>
        <location evidence="4 5 7 8 9 10">Cell membrane</location>
        <topology evidence="1">Multi-pass membrane protein</topology>
    </subcellularLocation>
    <subcellularLocation>
        <location evidence="2">Cell projection</location>
    </subcellularLocation>
</comment>
<comment type="alternative products">
    <event type="alternative splicing"/>
    <isoform>
        <id>P23416-1</id>
        <name>Alpha-2*</name>
        <sequence type="displayed"/>
    </isoform>
    <isoform>
        <id>P23416-2</id>
        <name>Alpha-2B</name>
        <sequence type="described" ref="VSP_000082"/>
    </isoform>
    <isoform>
        <id>P23416-3</id>
        <name>3</name>
        <sequence type="described" ref="VSP_045465"/>
    </isoform>
</comment>
<comment type="disease" evidence="6 10 11 13">
    <disease id="DI-06379">
        <name>Intellectual developmental disorder, X-linked, syndromic, Pilorge type</name>
        <acronym>MRXSP</acronym>
        <description>A disorder characterized by global developmental delay with variably impaired intellectual development, speech delay, and behavioral abnormalities. Variable features include motor incoordination, seizures, and ocular abnormalities. Disease onset is in infancy, and severity is higly variable.</description>
        <dbReference type="MIM" id="301076"/>
    </disease>
    <text>The disease is caused by variants affecting the gene represented in this entry.</text>
</comment>
<comment type="miscellaneous">
    <text evidence="7">The alpha subunit binds strychnine.</text>
</comment>
<comment type="similarity">
    <text evidence="17">Belongs to the ligand-gated ion channel (TC 1.A.9) family. Glycine receptor (TC 1.A.9.3) subfamily. GLRA2 sub-subfamily.</text>
</comment>
<sequence>MNRQLVNILTALFAFFLETNHFRTAFCKDHDSRSGKQPSQTLSPSDFLDKLMGRTSGYDARIRPNFKGPPVNVTCNIFINSFGSVTETTMDYRVNIFLRQQWNDSRLAYSEYPDDSLDLDPSMLDSIWKPDLFFANEKGANFHDVTTDNKLLRISKNGKVLYSIRLTLTLSCPMDLKNFPMDVQTCTMQLESFGYTMNDLIFEWLSDGPVQVAEGLTLPQFILKEEKELGYCTKHYNTGKFTCIEVKFHLERQMGYYLIQMYIPSLLIVILSWVSFWINMDAAPARVALGITTVLTMTTQSSGSRASLPKVSYVKAIDIWMAVCLLFVFAALLEYAAVNFVSRQHKEFLRLRRRQKRQNKEEDVTRESRFNFSGYGMGHCLQVKDGTAVKATPANPLPQPPKDGDAIKKKFVDRAKRIDTISRAAFPLAFLIFNIFYWITYKIIRHEDVHKK</sequence>
<accession>P23416</accession>
<accession>A8K0J6</accession>
<accession>B2R6I8</accession>
<accession>B7Z4F5</accession>
<accession>J3KQ59</accession>
<accession>Q53YX7</accession>
<accession>Q6ICQ0</accession>
<accession>Q99862</accession>
<reference key="1">
    <citation type="journal article" date="1990" name="EMBO J.">
        <title>Alpha subunit variants of the human glycine receptor: primary structures, functional expression and chromosomal localization of the corresponding genes.</title>
        <authorList>
            <person name="Grenningloh G."/>
            <person name="Schmieden V."/>
            <person name="Schofield P.R."/>
            <person name="Seeburg P.H."/>
            <person name="Siddique T."/>
            <person name="Mohandas T.K."/>
            <person name="Becker C.-M."/>
            <person name="Betz H."/>
        </authorList>
    </citation>
    <scope>NUCLEOTIDE SEQUENCE [MRNA] (ISOFORM ALPHA-2*)</scope>
    <scope>FUNCTION</scope>
    <scope>TRANSPORTER ACTIVITY</scope>
    <scope>SUBCELLULAR LOCATION</scope>
    <scope>ACTIVITY REGULATION</scope>
</reference>
<reference key="2">
    <citation type="journal article" date="1998" name="Am. J. Med. Genet.">
        <title>Analysis of the genomic structure of the human glycine receptor alpha-2 subunit gene and exclusion of this gene as a candidate for Rett syndrome.</title>
        <authorList>
            <person name="Cummings C.J."/>
            <person name="Dahle E.J.R."/>
            <person name="Zoghbi H.Y."/>
        </authorList>
    </citation>
    <scope>NUCLEOTIDE SEQUENCE [GENOMIC DNA]</scope>
</reference>
<reference key="3">
    <citation type="journal article" date="2004" name="Br. J. Pharmacol.">
        <title>Differential agonist sensitivity of glycine receptor alpha2 subunit splice variants.</title>
        <authorList>
            <person name="Miller P.S."/>
            <person name="Harvey R.J."/>
            <person name="Smart T.G."/>
        </authorList>
    </citation>
    <scope>NUCLEOTIDE SEQUENCE [MRNA] (ISOFORMS ALPHA-2B AND ALPHA-2*)</scope>
    <scope>FUNCTION</scope>
    <scope>TRANSPORTER ACTIVITY</scope>
    <scope>SUBCELLULAR LOCATION</scope>
    <scope>SUBUNIT</scope>
    <scope>ACTIVITY REGULATION</scope>
    <scope>BIOPHYSICOCHEMICAL PROPERTIES</scope>
</reference>
<reference key="4">
    <citation type="submission" date="2004-05" db="EMBL/GenBank/DDBJ databases">
        <title>Cloning of human full open reading frames in Gateway(TM) system entry vector (pDONR201).</title>
        <authorList>
            <person name="Ebert L."/>
            <person name="Schick M."/>
            <person name="Neubert P."/>
            <person name="Schatten R."/>
            <person name="Henze S."/>
            <person name="Korn B."/>
        </authorList>
    </citation>
    <scope>NUCLEOTIDE SEQUENCE [LARGE SCALE MRNA] (ISOFORM ALPHA-2B)</scope>
</reference>
<reference key="5">
    <citation type="journal article" date="2004" name="Nat. Genet.">
        <title>Complete sequencing and characterization of 21,243 full-length human cDNAs.</title>
        <authorList>
            <person name="Ota T."/>
            <person name="Suzuki Y."/>
            <person name="Nishikawa T."/>
            <person name="Otsuki T."/>
            <person name="Sugiyama T."/>
            <person name="Irie R."/>
            <person name="Wakamatsu A."/>
            <person name="Hayashi K."/>
            <person name="Sato H."/>
            <person name="Nagai K."/>
            <person name="Kimura K."/>
            <person name="Makita H."/>
            <person name="Sekine M."/>
            <person name="Obayashi M."/>
            <person name="Nishi T."/>
            <person name="Shibahara T."/>
            <person name="Tanaka T."/>
            <person name="Ishii S."/>
            <person name="Yamamoto J."/>
            <person name="Saito K."/>
            <person name="Kawai Y."/>
            <person name="Isono Y."/>
            <person name="Nakamura Y."/>
            <person name="Nagahari K."/>
            <person name="Murakami K."/>
            <person name="Yasuda T."/>
            <person name="Iwayanagi T."/>
            <person name="Wagatsuma M."/>
            <person name="Shiratori A."/>
            <person name="Sudo H."/>
            <person name="Hosoiri T."/>
            <person name="Kaku Y."/>
            <person name="Kodaira H."/>
            <person name="Kondo H."/>
            <person name="Sugawara M."/>
            <person name="Takahashi M."/>
            <person name="Kanda K."/>
            <person name="Yokoi T."/>
            <person name="Furuya T."/>
            <person name="Kikkawa E."/>
            <person name="Omura Y."/>
            <person name="Abe K."/>
            <person name="Kamihara K."/>
            <person name="Katsuta N."/>
            <person name="Sato K."/>
            <person name="Tanikawa M."/>
            <person name="Yamazaki M."/>
            <person name="Ninomiya K."/>
            <person name="Ishibashi T."/>
            <person name="Yamashita H."/>
            <person name="Murakawa K."/>
            <person name="Fujimori K."/>
            <person name="Tanai H."/>
            <person name="Kimata M."/>
            <person name="Watanabe M."/>
            <person name="Hiraoka S."/>
            <person name="Chiba Y."/>
            <person name="Ishida S."/>
            <person name="Ono Y."/>
            <person name="Takiguchi S."/>
            <person name="Watanabe S."/>
            <person name="Yosida M."/>
            <person name="Hotuta T."/>
            <person name="Kusano J."/>
            <person name="Kanehori K."/>
            <person name="Takahashi-Fujii A."/>
            <person name="Hara H."/>
            <person name="Tanase T.-O."/>
            <person name="Nomura Y."/>
            <person name="Togiya S."/>
            <person name="Komai F."/>
            <person name="Hara R."/>
            <person name="Takeuchi K."/>
            <person name="Arita M."/>
            <person name="Imose N."/>
            <person name="Musashino K."/>
            <person name="Yuuki H."/>
            <person name="Oshima A."/>
            <person name="Sasaki N."/>
            <person name="Aotsuka S."/>
            <person name="Yoshikawa Y."/>
            <person name="Matsunawa H."/>
            <person name="Ichihara T."/>
            <person name="Shiohata N."/>
            <person name="Sano S."/>
            <person name="Moriya S."/>
            <person name="Momiyama H."/>
            <person name="Satoh N."/>
            <person name="Takami S."/>
            <person name="Terashima Y."/>
            <person name="Suzuki O."/>
            <person name="Nakagawa S."/>
            <person name="Senoh A."/>
            <person name="Mizoguchi H."/>
            <person name="Goto Y."/>
            <person name="Shimizu F."/>
            <person name="Wakebe H."/>
            <person name="Hishigaki H."/>
            <person name="Watanabe T."/>
            <person name="Sugiyama A."/>
            <person name="Takemoto M."/>
            <person name="Kawakami B."/>
            <person name="Yamazaki M."/>
            <person name="Watanabe K."/>
            <person name="Kumagai A."/>
            <person name="Itakura S."/>
            <person name="Fukuzumi Y."/>
            <person name="Fujimori Y."/>
            <person name="Komiyama M."/>
            <person name="Tashiro H."/>
            <person name="Tanigami A."/>
            <person name="Fujiwara T."/>
            <person name="Ono T."/>
            <person name="Yamada K."/>
            <person name="Fujii Y."/>
            <person name="Ozaki K."/>
            <person name="Hirao M."/>
            <person name="Ohmori Y."/>
            <person name="Kawabata A."/>
            <person name="Hikiji T."/>
            <person name="Kobatake N."/>
            <person name="Inagaki H."/>
            <person name="Ikema Y."/>
            <person name="Okamoto S."/>
            <person name="Okitani R."/>
            <person name="Kawakami T."/>
            <person name="Noguchi S."/>
            <person name="Itoh T."/>
            <person name="Shigeta K."/>
            <person name="Senba T."/>
            <person name="Matsumura K."/>
            <person name="Nakajima Y."/>
            <person name="Mizuno T."/>
            <person name="Morinaga M."/>
            <person name="Sasaki M."/>
            <person name="Togashi T."/>
            <person name="Oyama M."/>
            <person name="Hata H."/>
            <person name="Watanabe M."/>
            <person name="Komatsu T."/>
            <person name="Mizushima-Sugano J."/>
            <person name="Satoh T."/>
            <person name="Shirai Y."/>
            <person name="Takahashi Y."/>
            <person name="Nakagawa K."/>
            <person name="Okumura K."/>
            <person name="Nagase T."/>
            <person name="Nomura N."/>
            <person name="Kikuchi H."/>
            <person name="Masuho Y."/>
            <person name="Yamashita R."/>
            <person name="Nakai K."/>
            <person name="Yada T."/>
            <person name="Nakamura Y."/>
            <person name="Ohara O."/>
            <person name="Isogai T."/>
            <person name="Sugano S."/>
        </authorList>
    </citation>
    <scope>NUCLEOTIDE SEQUENCE [LARGE SCALE MRNA] (ISOFORMS ALPHA-2*; ALPHA-2B AND 3)</scope>
    <source>
        <tissue>Brain</tissue>
        <tissue>Cerebellum</tissue>
    </source>
</reference>
<reference key="6">
    <citation type="journal article" date="2005" name="Nature">
        <title>The DNA sequence of the human X chromosome.</title>
        <authorList>
            <person name="Ross M.T."/>
            <person name="Grafham D.V."/>
            <person name="Coffey A.J."/>
            <person name="Scherer S."/>
            <person name="McLay K."/>
            <person name="Muzny D."/>
            <person name="Platzer M."/>
            <person name="Howell G.R."/>
            <person name="Burrows C."/>
            <person name="Bird C.P."/>
            <person name="Frankish A."/>
            <person name="Lovell F.L."/>
            <person name="Howe K.L."/>
            <person name="Ashurst J.L."/>
            <person name="Fulton R.S."/>
            <person name="Sudbrak R."/>
            <person name="Wen G."/>
            <person name="Jones M.C."/>
            <person name="Hurles M.E."/>
            <person name="Andrews T.D."/>
            <person name="Scott C.E."/>
            <person name="Searle S."/>
            <person name="Ramser J."/>
            <person name="Whittaker A."/>
            <person name="Deadman R."/>
            <person name="Carter N.P."/>
            <person name="Hunt S.E."/>
            <person name="Chen R."/>
            <person name="Cree A."/>
            <person name="Gunaratne P."/>
            <person name="Havlak P."/>
            <person name="Hodgson A."/>
            <person name="Metzker M.L."/>
            <person name="Richards S."/>
            <person name="Scott G."/>
            <person name="Steffen D."/>
            <person name="Sodergren E."/>
            <person name="Wheeler D.A."/>
            <person name="Worley K.C."/>
            <person name="Ainscough R."/>
            <person name="Ambrose K.D."/>
            <person name="Ansari-Lari M.A."/>
            <person name="Aradhya S."/>
            <person name="Ashwell R.I."/>
            <person name="Babbage A.K."/>
            <person name="Bagguley C.L."/>
            <person name="Ballabio A."/>
            <person name="Banerjee R."/>
            <person name="Barker G.E."/>
            <person name="Barlow K.F."/>
            <person name="Barrett I.P."/>
            <person name="Bates K.N."/>
            <person name="Beare D.M."/>
            <person name="Beasley H."/>
            <person name="Beasley O."/>
            <person name="Beck A."/>
            <person name="Bethel G."/>
            <person name="Blechschmidt K."/>
            <person name="Brady N."/>
            <person name="Bray-Allen S."/>
            <person name="Bridgeman A.M."/>
            <person name="Brown A.J."/>
            <person name="Brown M.J."/>
            <person name="Bonnin D."/>
            <person name="Bruford E.A."/>
            <person name="Buhay C."/>
            <person name="Burch P."/>
            <person name="Burford D."/>
            <person name="Burgess J."/>
            <person name="Burrill W."/>
            <person name="Burton J."/>
            <person name="Bye J.M."/>
            <person name="Carder C."/>
            <person name="Carrel L."/>
            <person name="Chako J."/>
            <person name="Chapman J.C."/>
            <person name="Chavez D."/>
            <person name="Chen E."/>
            <person name="Chen G."/>
            <person name="Chen Y."/>
            <person name="Chen Z."/>
            <person name="Chinault C."/>
            <person name="Ciccodicola A."/>
            <person name="Clark S.Y."/>
            <person name="Clarke G."/>
            <person name="Clee C.M."/>
            <person name="Clegg S."/>
            <person name="Clerc-Blankenburg K."/>
            <person name="Clifford K."/>
            <person name="Cobley V."/>
            <person name="Cole C.G."/>
            <person name="Conquer J.S."/>
            <person name="Corby N."/>
            <person name="Connor R.E."/>
            <person name="David R."/>
            <person name="Davies J."/>
            <person name="Davis C."/>
            <person name="Davis J."/>
            <person name="Delgado O."/>
            <person name="Deshazo D."/>
            <person name="Dhami P."/>
            <person name="Ding Y."/>
            <person name="Dinh H."/>
            <person name="Dodsworth S."/>
            <person name="Draper H."/>
            <person name="Dugan-Rocha S."/>
            <person name="Dunham A."/>
            <person name="Dunn M."/>
            <person name="Durbin K.J."/>
            <person name="Dutta I."/>
            <person name="Eades T."/>
            <person name="Ellwood M."/>
            <person name="Emery-Cohen A."/>
            <person name="Errington H."/>
            <person name="Evans K.L."/>
            <person name="Faulkner L."/>
            <person name="Francis F."/>
            <person name="Frankland J."/>
            <person name="Fraser A.E."/>
            <person name="Galgoczy P."/>
            <person name="Gilbert J."/>
            <person name="Gill R."/>
            <person name="Gloeckner G."/>
            <person name="Gregory S.G."/>
            <person name="Gribble S."/>
            <person name="Griffiths C."/>
            <person name="Grocock R."/>
            <person name="Gu Y."/>
            <person name="Gwilliam R."/>
            <person name="Hamilton C."/>
            <person name="Hart E.A."/>
            <person name="Hawes A."/>
            <person name="Heath P.D."/>
            <person name="Heitmann K."/>
            <person name="Hennig S."/>
            <person name="Hernandez J."/>
            <person name="Hinzmann B."/>
            <person name="Ho S."/>
            <person name="Hoffs M."/>
            <person name="Howden P.J."/>
            <person name="Huckle E.J."/>
            <person name="Hume J."/>
            <person name="Hunt P.J."/>
            <person name="Hunt A.R."/>
            <person name="Isherwood J."/>
            <person name="Jacob L."/>
            <person name="Johnson D."/>
            <person name="Jones S."/>
            <person name="de Jong P.J."/>
            <person name="Joseph S.S."/>
            <person name="Keenan S."/>
            <person name="Kelly S."/>
            <person name="Kershaw J.K."/>
            <person name="Khan Z."/>
            <person name="Kioschis P."/>
            <person name="Klages S."/>
            <person name="Knights A.J."/>
            <person name="Kosiura A."/>
            <person name="Kovar-Smith C."/>
            <person name="Laird G.K."/>
            <person name="Langford C."/>
            <person name="Lawlor S."/>
            <person name="Leversha M."/>
            <person name="Lewis L."/>
            <person name="Liu W."/>
            <person name="Lloyd C."/>
            <person name="Lloyd D.M."/>
            <person name="Loulseged H."/>
            <person name="Loveland J.E."/>
            <person name="Lovell J.D."/>
            <person name="Lozado R."/>
            <person name="Lu J."/>
            <person name="Lyne R."/>
            <person name="Ma J."/>
            <person name="Maheshwari M."/>
            <person name="Matthews L.H."/>
            <person name="McDowall J."/>
            <person name="McLaren S."/>
            <person name="McMurray A."/>
            <person name="Meidl P."/>
            <person name="Meitinger T."/>
            <person name="Milne S."/>
            <person name="Miner G."/>
            <person name="Mistry S.L."/>
            <person name="Morgan M."/>
            <person name="Morris S."/>
            <person name="Mueller I."/>
            <person name="Mullikin J.C."/>
            <person name="Nguyen N."/>
            <person name="Nordsiek G."/>
            <person name="Nyakatura G."/>
            <person name="O'dell C.N."/>
            <person name="Okwuonu G."/>
            <person name="Palmer S."/>
            <person name="Pandian R."/>
            <person name="Parker D."/>
            <person name="Parrish J."/>
            <person name="Pasternak S."/>
            <person name="Patel D."/>
            <person name="Pearce A.V."/>
            <person name="Pearson D.M."/>
            <person name="Pelan S.E."/>
            <person name="Perez L."/>
            <person name="Porter K.M."/>
            <person name="Ramsey Y."/>
            <person name="Reichwald K."/>
            <person name="Rhodes S."/>
            <person name="Ridler K.A."/>
            <person name="Schlessinger D."/>
            <person name="Schueler M.G."/>
            <person name="Sehra H.K."/>
            <person name="Shaw-Smith C."/>
            <person name="Shen H."/>
            <person name="Sheridan E.M."/>
            <person name="Shownkeen R."/>
            <person name="Skuce C.D."/>
            <person name="Smith M.L."/>
            <person name="Sotheran E.C."/>
            <person name="Steingruber H.E."/>
            <person name="Steward C.A."/>
            <person name="Storey R."/>
            <person name="Swann R.M."/>
            <person name="Swarbreck D."/>
            <person name="Tabor P.E."/>
            <person name="Taudien S."/>
            <person name="Taylor T."/>
            <person name="Teague B."/>
            <person name="Thomas K."/>
            <person name="Thorpe A."/>
            <person name="Timms K."/>
            <person name="Tracey A."/>
            <person name="Trevanion S."/>
            <person name="Tromans A.C."/>
            <person name="d'Urso M."/>
            <person name="Verduzco D."/>
            <person name="Villasana D."/>
            <person name="Waldron L."/>
            <person name="Wall M."/>
            <person name="Wang Q."/>
            <person name="Warren J."/>
            <person name="Warry G.L."/>
            <person name="Wei X."/>
            <person name="West A."/>
            <person name="Whitehead S.L."/>
            <person name="Whiteley M.N."/>
            <person name="Wilkinson J.E."/>
            <person name="Willey D.L."/>
            <person name="Williams G."/>
            <person name="Williams L."/>
            <person name="Williamson A."/>
            <person name="Williamson H."/>
            <person name="Wilming L."/>
            <person name="Woodmansey R.L."/>
            <person name="Wray P.W."/>
            <person name="Yen J."/>
            <person name="Zhang J."/>
            <person name="Zhou J."/>
            <person name="Zoghbi H."/>
            <person name="Zorilla S."/>
            <person name="Buck D."/>
            <person name="Reinhardt R."/>
            <person name="Poustka A."/>
            <person name="Rosenthal A."/>
            <person name="Lehrach H."/>
            <person name="Meindl A."/>
            <person name="Minx P.J."/>
            <person name="Hillier L.W."/>
            <person name="Willard H.F."/>
            <person name="Wilson R.K."/>
            <person name="Waterston R.H."/>
            <person name="Rice C.M."/>
            <person name="Vaudin M."/>
            <person name="Coulson A."/>
            <person name="Nelson D.L."/>
            <person name="Weinstock G."/>
            <person name="Sulston J.E."/>
            <person name="Durbin R.M."/>
            <person name="Hubbard T."/>
            <person name="Gibbs R.A."/>
            <person name="Beck S."/>
            <person name="Rogers J."/>
            <person name="Bentley D.R."/>
        </authorList>
    </citation>
    <scope>NUCLEOTIDE SEQUENCE [LARGE SCALE GENOMIC DNA]</scope>
</reference>
<reference key="7">
    <citation type="submission" date="2005-07" db="EMBL/GenBank/DDBJ databases">
        <authorList>
            <person name="Mural R.J."/>
            <person name="Istrail S."/>
            <person name="Sutton G.G."/>
            <person name="Florea L."/>
            <person name="Halpern A.L."/>
            <person name="Mobarry C.M."/>
            <person name="Lippert R."/>
            <person name="Walenz B."/>
            <person name="Shatkay H."/>
            <person name="Dew I."/>
            <person name="Miller J.R."/>
            <person name="Flanigan M.J."/>
            <person name="Edwards N.J."/>
            <person name="Bolanos R."/>
            <person name="Fasulo D."/>
            <person name="Halldorsson B.V."/>
            <person name="Hannenhalli S."/>
            <person name="Turner R."/>
            <person name="Yooseph S."/>
            <person name="Lu F."/>
            <person name="Nusskern D.R."/>
            <person name="Shue B.C."/>
            <person name="Zheng X.H."/>
            <person name="Zhong F."/>
            <person name="Delcher A.L."/>
            <person name="Huson D.H."/>
            <person name="Kravitz S.A."/>
            <person name="Mouchard L."/>
            <person name="Reinert K."/>
            <person name="Remington K.A."/>
            <person name="Clark A.G."/>
            <person name="Waterman M.S."/>
            <person name="Eichler E.E."/>
            <person name="Adams M.D."/>
            <person name="Hunkapiller M.W."/>
            <person name="Myers E.W."/>
            <person name="Venter J.C."/>
        </authorList>
    </citation>
    <scope>NUCLEOTIDE SEQUENCE [LARGE SCALE GENOMIC DNA]</scope>
</reference>
<reference key="8">
    <citation type="journal article" date="2004" name="Genome Res.">
        <title>The status, quality, and expansion of the NIH full-length cDNA project: the Mammalian Gene Collection (MGC).</title>
        <authorList>
            <consortium name="The MGC Project Team"/>
        </authorList>
    </citation>
    <scope>NUCLEOTIDE SEQUENCE [LARGE SCALE MRNA] (ISOFORM ALPHA-2*)</scope>
    <source>
        <tissue>Brain</tissue>
    </source>
</reference>
<reference key="9">
    <citation type="journal article" date="1996" name="Genome Res.">
        <title>Structure of the human alpha 2 subunit gene of the glycine receptor: use of vectorette and Alu-exon PCR.</title>
        <authorList>
            <person name="Monani U.R."/>
            <person name="Burghes A.H.M."/>
        </authorList>
    </citation>
    <scope>NUCLEOTIDE SEQUENCE [GENOMIC DNA] OF 1-360</scope>
</reference>
<reference key="10">
    <citation type="journal article" date="2005" name="J. Biol. Chem.">
        <title>Molecular basis for zinc potentiation at strychnine-sensitive glycine receptors.</title>
        <authorList>
            <person name="Miller P.S."/>
            <person name="Da Silva H.M."/>
            <person name="Smart T.G."/>
        </authorList>
    </citation>
    <scope>FUNCTION</scope>
    <scope>TRANSPORTER ACTIVITY</scope>
    <scope>SUBCELLULAR LOCATION</scope>
    <scope>INTERACTION WITH GLRB</scope>
    <scope>ACTIVITY REGULATION</scope>
</reference>
<reference key="11">
    <citation type="journal article" date="2013" name="Alcohol. Clin. Exp. Res.">
        <title>Zinc-dependent modulation of alpha2- and alpha3-glycine receptor subunits by ethanol.</title>
        <authorList>
            <person name="McCracken L.M."/>
            <person name="Trudell J.R."/>
            <person name="McCracken M.L."/>
            <person name="Harris R.A."/>
        </authorList>
    </citation>
    <scope>FUNCTION</scope>
    <scope>TRANSPORTER ACTIVITY</scope>
    <scope>SUBCELLULAR LOCATION</scope>
    <scope>ACTIVITY REGULATION</scope>
</reference>
<reference key="12">
    <citation type="journal article" date="2015" name="Neuropharmacology">
        <title>Functional reconstitution of glycinergic synapses incorporating defined glycine receptor subunit combinations.</title>
        <authorList>
            <person name="Zhang Y."/>
            <person name="Dixon C.L."/>
            <person name="Keramidas A."/>
            <person name="Lynch J.W."/>
        </authorList>
    </citation>
    <scope>FUNCTION</scope>
    <scope>TRANSPORTER ACTIVITY</scope>
    <scope>SUBCELLULAR LOCATION</scope>
</reference>
<reference evidence="21 22 23 24" key="13">
    <citation type="journal article" date="2021" name="Neuron">
        <title>Characterization of the subunit composition and structure of adult human glycine receptors.</title>
        <authorList>
            <person name="Yu H."/>
            <person name="Bai X.-C."/>
            <person name="Wang W."/>
        </authorList>
    </citation>
    <scope>STRUCTURE BY ELECTRON MICROSCOPY (3.60 ANGSTROMS) OF 28-343 AND 409-452 IN COMPLEX WITH GLRB; GLYCINE AND ANTAGONIST STRYCHNINE</scope>
    <scope>FUNCTION</scope>
    <scope>ACTIVITY REGULATION</scope>
    <scope>SUBUNIT</scope>
    <scope>DISULFIDE BONDS</scope>
</reference>
<reference key="14">
    <citation type="journal article" date="2011" name="Mol. Psychiatry">
        <title>Systematic resequencing of X-chromosome synaptic genes in autism spectrum disorder and schizophrenia.</title>
        <authorList>
            <person name="Piton A."/>
            <person name="Gauthier J."/>
            <person name="Hamdan F.F."/>
            <person name="Lafreniere R.G."/>
            <person name="Yang Y."/>
            <person name="Henrion E."/>
            <person name="Laurent S."/>
            <person name="Noreau A."/>
            <person name="Thibodeau P."/>
            <person name="Karemera L."/>
            <person name="Spiegelman D."/>
            <person name="Kuku F."/>
            <person name="Duguay J."/>
            <person name="Destroismaisons L."/>
            <person name="Jolivet P."/>
            <person name="Cote M."/>
            <person name="Lachapelle K."/>
            <person name="Diallo O."/>
            <person name="Raymond A."/>
            <person name="Marineau C."/>
            <person name="Champagne N."/>
            <person name="Xiong L."/>
            <person name="Gaspar C."/>
            <person name="Riviere J.B."/>
            <person name="Tarabeux J."/>
            <person name="Cossette P."/>
            <person name="Krebs M.O."/>
            <person name="Rapoport J.L."/>
            <person name="Addington A."/>
            <person name="Delisi L.E."/>
            <person name="Mottron L."/>
            <person name="Joober R."/>
            <person name="Fombonne E."/>
            <person name="Drapeau P."/>
            <person name="Rouleau G.A."/>
        </authorList>
    </citation>
    <scope>VARIANT MRXSP LEU-350</scope>
</reference>
<reference key="15">
    <citation type="journal article" date="2016" name="Mol. Psychiatry">
        <title>Genetic and functional analyses demonstrate a role for abnormal glycinergic signaling in autism.</title>
        <authorList>
            <person name="Pilorge M."/>
            <person name="Fassier C."/>
            <person name="Le Corronc H."/>
            <person name="Potey A."/>
            <person name="Bai J."/>
            <person name="De Gois S."/>
            <person name="Delaby E."/>
            <person name="Assouline B."/>
            <person name="Guinchat V."/>
            <person name="Devillard F."/>
            <person name="Delorme R."/>
            <person name="Nygren G."/>
            <person name="Raastam M."/>
            <person name="Meier J.C."/>
            <person name="Otani S."/>
            <person name="Cheval H."/>
            <person name="James V.M."/>
            <person name="Topf M."/>
            <person name="Dear T.N."/>
            <person name="Gillberg C."/>
            <person name="Leboyer M."/>
            <person name="Giros B."/>
            <person name="Gautron S."/>
            <person name="Hazan J."/>
            <person name="Harvey R.J."/>
            <person name="Legendre P."/>
            <person name="Betancur C."/>
        </authorList>
    </citation>
    <scope>VARIANTS MRXSP SER-136 AND GLN-153</scope>
    <scope>CHARACTERIZATION OF VARIANTS MRXSP SER-136 AND GLN-153</scope>
    <scope>FUNCTION</scope>
    <scope>SUBCELLULAR LOCATION</scope>
    <scope>INVOLVEMENT IN MRXSP</scope>
</reference>
<reference key="16">
    <citation type="journal article" date="2017" name="Front. Mol. Neurosci.">
        <title>Structure-Function Analysis of the GlyR alpha2 Subunit Autism Mutation p.R323L Reveals a Gain-of-Function.</title>
        <authorList>
            <person name="Zhang Y."/>
            <person name="Ho T.N.T."/>
            <person name="Harvey R.J."/>
            <person name="Lynch J.W."/>
            <person name="Keramidas A."/>
        </authorList>
    </citation>
    <scope>CHARACTERIZATION OF VARIANT MRXSP LEU-350</scope>
    <scope>MUTAGENESIS OF ARG-350</scope>
</reference>
<reference key="17">
    <citation type="journal article" date="2022" name="Cell Rep.">
        <title>Drosophila functional screening of de novo variants in autism uncovers damaging variants and facilitates discovery of rare neurodevelopmental diseases.</title>
        <authorList>
            <person name="Marcogliese P.C."/>
            <person name="Deal S.L."/>
            <person name="Andrews J."/>
            <person name="Harnish J.M."/>
            <person name="Bhavana V.H."/>
            <person name="Graves H.K."/>
            <person name="Jangam S."/>
            <person name="Luo X."/>
            <person name="Liu N."/>
            <person name="Bei D."/>
            <person name="Chao Y.H."/>
            <person name="Hull B."/>
            <person name="Lee P.T."/>
            <person name="Pan H."/>
            <person name="Bhadane P."/>
            <person name="Huang M.C."/>
            <person name="Longley C.M."/>
            <person name="Chao H.T."/>
            <person name="Chung H.L."/>
            <person name="Haelterman N.A."/>
            <person name="Kanca O."/>
            <person name="Manivannan S.N."/>
            <person name="Rossetti L.Z."/>
            <person name="German R.J."/>
            <person name="Gerard A."/>
            <person name="Schwaibold E.M.C."/>
            <person name="Fehr S."/>
            <person name="Guerrini R."/>
            <person name="Vetro A."/>
            <person name="England E."/>
            <person name="Murali C.N."/>
            <person name="Barakat T.S."/>
            <person name="van Dooren M.F."/>
            <person name="Wilke M."/>
            <person name="van Slegtenhorst M."/>
            <person name="Lesca G."/>
            <person name="Sabatier I."/>
            <person name="Chatron N."/>
            <person name="Brownstein C.A."/>
            <person name="Madden J.A."/>
            <person name="Agrawal P.B."/>
            <person name="Keren B."/>
            <person name="Courtin T."/>
            <person name="Perrin L."/>
            <person name="Brugger M."/>
            <person name="Roser T."/>
            <person name="Leiz S."/>
            <person name="Mau-Them F.T."/>
            <person name="Delanne J."/>
            <person name="Sukarova-Angelovska E."/>
            <person name="Trajkova S."/>
            <person name="Rosenhahn E."/>
            <person name="Strehlow V."/>
            <person name="Platzer K."/>
            <person name="Keller R."/>
            <person name="Pavinato L."/>
            <person name="Brusco A."/>
            <person name="Rosenfeld J.A."/>
            <person name="Marom R."/>
            <person name="Wangler M.F."/>
            <person name="Yamamoto S."/>
        </authorList>
    </citation>
    <scope>VARIANTS MRXSP SER-47; CYS-252; MET-259; THR-288; MET-296; THR-396; LEU-400 AND GLN-445</scope>
</reference>
<proteinExistence type="evidence at protein level"/>
<evidence type="ECO:0000250" key="1">
    <source>
        <dbReference type="UniProtKB" id="P23415"/>
    </source>
</evidence>
<evidence type="ECO:0000250" key="2">
    <source>
        <dbReference type="UniProtKB" id="Q7TNC8"/>
    </source>
</evidence>
<evidence type="ECO:0000255" key="3"/>
<evidence type="ECO:0000269" key="4">
    <source>
    </source>
</evidence>
<evidence type="ECO:0000269" key="5">
    <source>
    </source>
</evidence>
<evidence type="ECO:0000269" key="6">
    <source>
    </source>
</evidence>
<evidence type="ECO:0000269" key="7">
    <source>
    </source>
</evidence>
<evidence type="ECO:0000269" key="8">
    <source>
    </source>
</evidence>
<evidence type="ECO:0000269" key="9">
    <source>
    </source>
</evidence>
<evidence type="ECO:0000269" key="10">
    <source>
    </source>
</evidence>
<evidence type="ECO:0000269" key="11">
    <source>
    </source>
</evidence>
<evidence type="ECO:0000269" key="12">
    <source>
    </source>
</evidence>
<evidence type="ECO:0000269" key="13">
    <source>
    </source>
</evidence>
<evidence type="ECO:0000303" key="14">
    <source>
    </source>
</evidence>
<evidence type="ECO:0000303" key="15">
    <source>
    </source>
</evidence>
<evidence type="ECO:0000303" key="16">
    <source ref="4"/>
</evidence>
<evidence type="ECO:0000305" key="17"/>
<evidence type="ECO:0000305" key="18">
    <source>
    </source>
</evidence>
<evidence type="ECO:0000305" key="19">
    <source>
    </source>
</evidence>
<evidence type="ECO:0000312" key="20">
    <source>
        <dbReference type="HGNC" id="HGNC:4327"/>
    </source>
</evidence>
<evidence type="ECO:0007744" key="21">
    <source>
        <dbReference type="PDB" id="5BKF"/>
    </source>
</evidence>
<evidence type="ECO:0007744" key="22">
    <source>
        <dbReference type="PDB" id="5BKG"/>
    </source>
</evidence>
<evidence type="ECO:0007744" key="23">
    <source>
        <dbReference type="PDB" id="7KUY"/>
    </source>
</evidence>
<evidence type="ECO:0007744" key="24">
    <source>
        <dbReference type="PDB" id="7L31"/>
    </source>
</evidence>
<gene>
    <name evidence="20" type="primary">GLRA2</name>
</gene>
<dbReference type="EMBL" id="X52008">
    <property type="protein sequence ID" value="CAA36257.1"/>
    <property type="molecule type" value="mRNA"/>
</dbReference>
<dbReference type="EMBL" id="AF053495">
    <property type="protein sequence ID" value="AAC35290.1"/>
    <property type="molecule type" value="Genomic_DNA"/>
</dbReference>
<dbReference type="EMBL" id="AF053487">
    <property type="protein sequence ID" value="AAC35290.1"/>
    <property type="status" value="JOINED"/>
    <property type="molecule type" value="Genomic_DNA"/>
</dbReference>
<dbReference type="EMBL" id="AF053488">
    <property type="protein sequence ID" value="AAC35290.1"/>
    <property type="status" value="JOINED"/>
    <property type="molecule type" value="Genomic_DNA"/>
</dbReference>
<dbReference type="EMBL" id="AF053489">
    <property type="protein sequence ID" value="AAC35290.1"/>
    <property type="status" value="JOINED"/>
    <property type="molecule type" value="Genomic_DNA"/>
</dbReference>
<dbReference type="EMBL" id="AF053490">
    <property type="protein sequence ID" value="AAC35290.1"/>
    <property type="status" value="JOINED"/>
    <property type="molecule type" value="Genomic_DNA"/>
</dbReference>
<dbReference type="EMBL" id="AF053491">
    <property type="protein sequence ID" value="AAC35290.1"/>
    <property type="status" value="JOINED"/>
    <property type="molecule type" value="Genomic_DNA"/>
</dbReference>
<dbReference type="EMBL" id="AF053492">
    <property type="protein sequence ID" value="AAC35290.1"/>
    <property type="status" value="JOINED"/>
    <property type="molecule type" value="Genomic_DNA"/>
</dbReference>
<dbReference type="EMBL" id="AF053493">
    <property type="protein sequence ID" value="AAC35290.1"/>
    <property type="status" value="JOINED"/>
    <property type="molecule type" value="Genomic_DNA"/>
</dbReference>
<dbReference type="EMBL" id="AF053494">
    <property type="protein sequence ID" value="AAC35290.1"/>
    <property type="status" value="JOINED"/>
    <property type="molecule type" value="Genomic_DNA"/>
</dbReference>
<dbReference type="EMBL" id="AY437083">
    <property type="protein sequence ID" value="AAR87842.1"/>
    <property type="molecule type" value="mRNA"/>
</dbReference>
<dbReference type="EMBL" id="AY437084">
    <property type="protein sequence ID" value="AAR87843.1"/>
    <property type="molecule type" value="mRNA"/>
</dbReference>
<dbReference type="EMBL" id="CR450343">
    <property type="protein sequence ID" value="CAG29339.1"/>
    <property type="molecule type" value="mRNA"/>
</dbReference>
<dbReference type="EMBL" id="AK289561">
    <property type="protein sequence ID" value="BAF82250.1"/>
    <property type="molecule type" value="mRNA"/>
</dbReference>
<dbReference type="EMBL" id="AK297304">
    <property type="protein sequence ID" value="BAH12541.1"/>
    <property type="molecule type" value="mRNA"/>
</dbReference>
<dbReference type="EMBL" id="AK312591">
    <property type="protein sequence ID" value="BAG35485.1"/>
    <property type="molecule type" value="mRNA"/>
</dbReference>
<dbReference type="EMBL" id="AC003658">
    <property type="status" value="NOT_ANNOTATED_CDS"/>
    <property type="molecule type" value="Genomic_DNA"/>
</dbReference>
<dbReference type="EMBL" id="AC003683">
    <property type="status" value="NOT_ANNOTATED_CDS"/>
    <property type="molecule type" value="Genomic_DNA"/>
</dbReference>
<dbReference type="EMBL" id="CH471074">
    <property type="protein sequence ID" value="EAW98859.1"/>
    <property type="molecule type" value="Genomic_DNA"/>
</dbReference>
<dbReference type="EMBL" id="CH471074">
    <property type="protein sequence ID" value="EAW98860.1"/>
    <property type="molecule type" value="Genomic_DNA"/>
</dbReference>
<dbReference type="EMBL" id="BC032864">
    <property type="protein sequence ID" value="AAH32864.1"/>
    <property type="molecule type" value="mRNA"/>
</dbReference>
<dbReference type="EMBL" id="U77731">
    <property type="protein sequence ID" value="AAB38272.1"/>
    <property type="molecule type" value="Genomic_DNA"/>
</dbReference>
<dbReference type="EMBL" id="U77724">
    <property type="protein sequence ID" value="AAB38272.1"/>
    <property type="status" value="JOINED"/>
    <property type="molecule type" value="Genomic_DNA"/>
</dbReference>
<dbReference type="EMBL" id="U77725">
    <property type="protein sequence ID" value="AAB38272.1"/>
    <property type="status" value="JOINED"/>
    <property type="molecule type" value="Genomic_DNA"/>
</dbReference>
<dbReference type="EMBL" id="U77726">
    <property type="protein sequence ID" value="AAB38272.1"/>
    <property type="status" value="JOINED"/>
    <property type="molecule type" value="Genomic_DNA"/>
</dbReference>
<dbReference type="EMBL" id="U77727">
    <property type="protein sequence ID" value="AAB38272.1"/>
    <property type="status" value="JOINED"/>
    <property type="molecule type" value="Genomic_DNA"/>
</dbReference>
<dbReference type="EMBL" id="U77728">
    <property type="protein sequence ID" value="AAB38272.1"/>
    <property type="status" value="JOINED"/>
    <property type="molecule type" value="Genomic_DNA"/>
</dbReference>
<dbReference type="EMBL" id="U77729">
    <property type="protein sequence ID" value="AAB38272.1"/>
    <property type="status" value="JOINED"/>
    <property type="molecule type" value="Genomic_DNA"/>
</dbReference>
<dbReference type="EMBL" id="U77730">
    <property type="protein sequence ID" value="AAB38272.1"/>
    <property type="status" value="JOINED"/>
    <property type="molecule type" value="Genomic_DNA"/>
</dbReference>
<dbReference type="EMBL" id="U77731">
    <property type="protein sequence ID" value="AAB38273.1"/>
    <property type="molecule type" value="Genomic_DNA"/>
</dbReference>
<dbReference type="EMBL" id="U77724">
    <property type="protein sequence ID" value="AAB38273.1"/>
    <property type="status" value="JOINED"/>
    <property type="molecule type" value="Genomic_DNA"/>
</dbReference>
<dbReference type="EMBL" id="U77725">
    <property type="protein sequence ID" value="AAB38273.1"/>
    <property type="status" value="JOINED"/>
    <property type="molecule type" value="Genomic_DNA"/>
</dbReference>
<dbReference type="EMBL" id="U77726">
    <property type="protein sequence ID" value="AAB38273.1"/>
    <property type="status" value="JOINED"/>
    <property type="molecule type" value="Genomic_DNA"/>
</dbReference>
<dbReference type="EMBL" id="U77727">
    <property type="protein sequence ID" value="AAB38273.1"/>
    <property type="status" value="JOINED"/>
    <property type="molecule type" value="Genomic_DNA"/>
</dbReference>
<dbReference type="EMBL" id="U77728">
    <property type="protein sequence ID" value="AAB38273.1"/>
    <property type="status" value="JOINED"/>
    <property type="molecule type" value="Genomic_DNA"/>
</dbReference>
<dbReference type="EMBL" id="U77729">
    <property type="protein sequence ID" value="AAB38273.1"/>
    <property type="status" value="JOINED"/>
    <property type="molecule type" value="Genomic_DNA"/>
</dbReference>
<dbReference type="EMBL" id="U77730">
    <property type="protein sequence ID" value="AAB38273.1"/>
    <property type="status" value="JOINED"/>
    <property type="molecule type" value="Genomic_DNA"/>
</dbReference>
<dbReference type="CCDS" id="CCDS14160.1">
    <molecule id="P23416-1"/>
</dbReference>
<dbReference type="CCDS" id="CCDS48085.1">
    <molecule id="P23416-2"/>
</dbReference>
<dbReference type="CCDS" id="CCDS55371.1">
    <molecule id="P23416-3"/>
</dbReference>
<dbReference type="PIR" id="S12381">
    <property type="entry name" value="S12381"/>
</dbReference>
<dbReference type="RefSeq" id="NP_001112357.1">
    <molecule id="P23416-1"/>
    <property type="nucleotide sequence ID" value="NM_001118885.2"/>
</dbReference>
<dbReference type="RefSeq" id="NP_001112358.1">
    <molecule id="P23416-2"/>
    <property type="nucleotide sequence ID" value="NM_001118886.2"/>
</dbReference>
<dbReference type="RefSeq" id="NP_001165413.1">
    <molecule id="P23416-3"/>
    <property type="nucleotide sequence ID" value="NM_001171942.2"/>
</dbReference>
<dbReference type="RefSeq" id="NP_002054.1">
    <molecule id="P23416-1"/>
    <property type="nucleotide sequence ID" value="NM_002063.4"/>
</dbReference>
<dbReference type="RefSeq" id="XP_016884916.1">
    <molecule id="P23416-2"/>
    <property type="nucleotide sequence ID" value="XM_017029427.2"/>
</dbReference>
<dbReference type="RefSeq" id="XP_016884917.1">
    <property type="nucleotide sequence ID" value="XM_017029428.1"/>
</dbReference>
<dbReference type="RefSeq" id="XP_016884918.1">
    <property type="nucleotide sequence ID" value="XM_017029429.1"/>
</dbReference>
<dbReference type="RefSeq" id="XP_047297955.1">
    <molecule id="P23416-1"/>
    <property type="nucleotide sequence ID" value="XM_047441999.1"/>
</dbReference>
<dbReference type="RefSeq" id="XP_047297956.1">
    <molecule id="P23416-3"/>
    <property type="nucleotide sequence ID" value="XM_047442000.1"/>
</dbReference>
<dbReference type="RefSeq" id="XP_054182829.1">
    <molecule id="P23416-2"/>
    <property type="nucleotide sequence ID" value="XM_054326854.1"/>
</dbReference>
<dbReference type="RefSeq" id="XP_054182830.1">
    <molecule id="P23416-1"/>
    <property type="nucleotide sequence ID" value="XM_054326855.1"/>
</dbReference>
<dbReference type="RefSeq" id="XP_054182832.1">
    <molecule id="P23416-3"/>
    <property type="nucleotide sequence ID" value="XM_054326857.1"/>
</dbReference>
<dbReference type="PDB" id="5BKF">
    <property type="method" value="EM"/>
    <property type="resolution" value="3.60 A"/>
    <property type="chains" value="A/B/C/D=28-343, A/B/C/D=409-452"/>
</dbReference>
<dbReference type="PDB" id="5BKG">
    <property type="method" value="EM"/>
    <property type="resolution" value="3.80 A"/>
    <property type="chains" value="A/B/C/D=28-343, A/B/C/D=409-452"/>
</dbReference>
<dbReference type="PDB" id="7KUY">
    <property type="method" value="EM"/>
    <property type="resolution" value="3.60 A"/>
    <property type="chains" value="A/B/C/D=28-343, A/B/C/D=409-452"/>
</dbReference>
<dbReference type="PDB" id="7L31">
    <property type="method" value="EM"/>
    <property type="resolution" value="3.80 A"/>
    <property type="chains" value="A/B/C/D=28-343, A/B/C/D=409-452"/>
</dbReference>
<dbReference type="PDBsum" id="5BKF"/>
<dbReference type="PDBsum" id="5BKG"/>
<dbReference type="PDBsum" id="7KUY"/>
<dbReference type="PDBsum" id="7L31"/>
<dbReference type="EMDB" id="EMD-23041"/>
<dbReference type="EMDB" id="EMD-23148"/>
<dbReference type="EMDB" id="EMD-9403"/>
<dbReference type="EMDB" id="EMD-9404"/>
<dbReference type="SMR" id="P23416"/>
<dbReference type="BioGRID" id="109004">
    <property type="interactions" value="31"/>
</dbReference>
<dbReference type="ComplexPortal" id="CPX-7844">
    <property type="entry name" value="Glycine receptor complex, GLRA2-GLRB"/>
</dbReference>
<dbReference type="FunCoup" id="P23416">
    <property type="interactions" value="1289"/>
</dbReference>
<dbReference type="IntAct" id="P23416">
    <property type="interactions" value="22"/>
</dbReference>
<dbReference type="STRING" id="9606.ENSP00000218075"/>
<dbReference type="BindingDB" id="P23416"/>
<dbReference type="ChEMBL" id="CHEMBL5871"/>
<dbReference type="DrugBank" id="DB00898">
    <property type="generic name" value="Ethanol"/>
</dbReference>
<dbReference type="DrugBank" id="DB06741">
    <property type="generic name" value="Gavestinel"/>
</dbReference>
<dbReference type="DrugBank" id="DB06743">
    <property type="generic name" value="Ginkgolide A"/>
</dbReference>
<dbReference type="DrugBank" id="DB00145">
    <property type="generic name" value="Glycine"/>
</dbReference>
<dbReference type="DrugBank" id="DB00431">
    <property type="generic name" value="Lindane"/>
</dbReference>
<dbReference type="DrugBank" id="DB00466">
    <property type="generic name" value="Picrotoxin"/>
</dbReference>
<dbReference type="DrugBank" id="DB15954">
    <property type="generic name" value="Strychnine"/>
</dbReference>
<dbReference type="DrugBank" id="DB01956">
    <property type="generic name" value="Taurine"/>
</dbReference>
<dbReference type="DrugBank" id="DB11582">
    <property type="generic name" value="Thiocolchicoside"/>
</dbReference>
<dbReference type="DrugCentral" id="P23416"/>
<dbReference type="GuidetoPHARMACOLOGY" id="424"/>
<dbReference type="TCDB" id="1.A.9.3.1">
    <property type="family name" value="the neurotransmitter receptor, cys loop, ligand-gated ion channel (lic) family"/>
</dbReference>
<dbReference type="GlyCosmos" id="P23416">
    <property type="glycosylation" value="2 sites, No reported glycans"/>
</dbReference>
<dbReference type="GlyGen" id="P23416">
    <property type="glycosylation" value="3 sites, 1 O-linked glycan (1 site)"/>
</dbReference>
<dbReference type="iPTMnet" id="P23416"/>
<dbReference type="PhosphoSitePlus" id="P23416"/>
<dbReference type="BioMuta" id="GLRA2"/>
<dbReference type="DMDM" id="121578"/>
<dbReference type="MassIVE" id="P23416"/>
<dbReference type="PaxDb" id="9606-ENSP00000218075"/>
<dbReference type="PeptideAtlas" id="P23416"/>
<dbReference type="ProteomicsDB" id="54091">
    <molecule id="P23416-1"/>
</dbReference>
<dbReference type="ProteomicsDB" id="54092">
    <molecule id="P23416-2"/>
</dbReference>
<dbReference type="Antibodypedia" id="54675">
    <property type="antibodies" value="55 antibodies from 18 providers"/>
</dbReference>
<dbReference type="DNASU" id="2742"/>
<dbReference type="Ensembl" id="ENST00000218075.9">
    <molecule id="P23416-1"/>
    <property type="protein sequence ID" value="ENSP00000218075.4"/>
    <property type="gene ID" value="ENSG00000101958.14"/>
</dbReference>
<dbReference type="Ensembl" id="ENST00000355020.9">
    <molecule id="P23416-2"/>
    <property type="protein sequence ID" value="ENSP00000347123.4"/>
    <property type="gene ID" value="ENSG00000101958.14"/>
</dbReference>
<dbReference type="GeneID" id="2742"/>
<dbReference type="KEGG" id="hsa:2742"/>
<dbReference type="MANE-Select" id="ENST00000218075.9">
    <property type="protein sequence ID" value="ENSP00000218075.4"/>
    <property type="RefSeq nucleotide sequence ID" value="NM_002063.4"/>
    <property type="RefSeq protein sequence ID" value="NP_002054.1"/>
</dbReference>
<dbReference type="UCSC" id="uc004cwe.5">
    <molecule id="P23416-1"/>
    <property type="organism name" value="human"/>
</dbReference>
<dbReference type="AGR" id="HGNC:4327"/>
<dbReference type="CTD" id="2742"/>
<dbReference type="DisGeNET" id="2742"/>
<dbReference type="GeneCards" id="GLRA2"/>
<dbReference type="HGNC" id="HGNC:4327">
    <property type="gene designation" value="GLRA2"/>
</dbReference>
<dbReference type="HPA" id="ENSG00000101958">
    <property type="expression patterns" value="Group enriched (brain, retina)"/>
</dbReference>
<dbReference type="MalaCards" id="GLRA2"/>
<dbReference type="MIM" id="301076">
    <property type="type" value="phenotype"/>
</dbReference>
<dbReference type="MIM" id="305990">
    <property type="type" value="gene"/>
</dbReference>
<dbReference type="neXtProt" id="NX_P23416"/>
<dbReference type="OpenTargets" id="ENSG00000101958"/>
<dbReference type="PharmGKB" id="PA28728"/>
<dbReference type="VEuPathDB" id="HostDB:ENSG00000101958"/>
<dbReference type="eggNOG" id="KOG3644">
    <property type="taxonomic scope" value="Eukaryota"/>
</dbReference>
<dbReference type="GeneTree" id="ENSGT00940000158730"/>
<dbReference type="HOGENOM" id="CLU_010920_1_2_1"/>
<dbReference type="InParanoid" id="P23416"/>
<dbReference type="OMA" id="GYACFNV"/>
<dbReference type="OrthoDB" id="407674at2759"/>
<dbReference type="PAN-GO" id="P23416">
    <property type="GO annotations" value="12 GO annotations based on evolutionary models"/>
</dbReference>
<dbReference type="PhylomeDB" id="P23416"/>
<dbReference type="TreeFam" id="TF315453"/>
<dbReference type="PathwayCommons" id="P23416"/>
<dbReference type="Reactome" id="R-HSA-112314">
    <property type="pathway name" value="Neurotransmitter receptors and postsynaptic signal transmission"/>
</dbReference>
<dbReference type="SignaLink" id="P23416"/>
<dbReference type="SIGNOR" id="P23416"/>
<dbReference type="BioGRID-ORCS" id="2742">
    <property type="hits" value="21 hits in 776 CRISPR screens"/>
</dbReference>
<dbReference type="ChiTaRS" id="GLRA2">
    <property type="organism name" value="human"/>
</dbReference>
<dbReference type="GeneWiki" id="GLRA2"/>
<dbReference type="GenomeRNAi" id="2742"/>
<dbReference type="Pharos" id="P23416">
    <property type="development level" value="Tchem"/>
</dbReference>
<dbReference type="PRO" id="PR:P23416"/>
<dbReference type="Proteomes" id="UP000005640">
    <property type="component" value="Chromosome X"/>
</dbReference>
<dbReference type="RNAct" id="P23416">
    <property type="molecule type" value="protein"/>
</dbReference>
<dbReference type="Bgee" id="ENSG00000101958">
    <property type="expression patterns" value="Expressed in cortical plate and 58 other cell types or tissues"/>
</dbReference>
<dbReference type="ExpressionAtlas" id="P23416">
    <property type="expression patterns" value="baseline and differential"/>
</dbReference>
<dbReference type="GO" id="GO:0042995">
    <property type="term" value="C:cell projection"/>
    <property type="evidence" value="ECO:0007669"/>
    <property type="project" value="UniProtKB-SubCell"/>
</dbReference>
<dbReference type="GO" id="GO:0034707">
    <property type="term" value="C:chloride channel complex"/>
    <property type="evidence" value="ECO:0007669"/>
    <property type="project" value="UniProtKB-KW"/>
</dbReference>
<dbReference type="GO" id="GO:0098982">
    <property type="term" value="C:GABA-ergic synapse"/>
    <property type="evidence" value="ECO:0007669"/>
    <property type="project" value="Ensembl"/>
</dbReference>
<dbReference type="GO" id="GO:0098690">
    <property type="term" value="C:glycinergic synapse"/>
    <property type="evidence" value="ECO:0007669"/>
    <property type="project" value="Ensembl"/>
</dbReference>
<dbReference type="GO" id="GO:0043231">
    <property type="term" value="C:intracellular membrane-bounded organelle"/>
    <property type="evidence" value="ECO:0000314"/>
    <property type="project" value="HPA"/>
</dbReference>
<dbReference type="GO" id="GO:0005886">
    <property type="term" value="C:plasma membrane"/>
    <property type="evidence" value="ECO:0000314"/>
    <property type="project" value="HPA"/>
</dbReference>
<dbReference type="GO" id="GO:0099634">
    <property type="term" value="C:postsynaptic specialization membrane"/>
    <property type="evidence" value="ECO:0007669"/>
    <property type="project" value="Ensembl"/>
</dbReference>
<dbReference type="GO" id="GO:0016934">
    <property type="term" value="F:extracellularly glycine-gated chloride channel activity"/>
    <property type="evidence" value="ECO:0000314"/>
    <property type="project" value="UniProtKB"/>
</dbReference>
<dbReference type="GO" id="GO:0016594">
    <property type="term" value="F:glycine binding"/>
    <property type="evidence" value="ECO:0000314"/>
    <property type="project" value="UniProtKB"/>
</dbReference>
<dbReference type="GO" id="GO:0022852">
    <property type="term" value="F:glycine-gated chloride ion channel activity"/>
    <property type="evidence" value="ECO:0000314"/>
    <property type="project" value="UniProtKB"/>
</dbReference>
<dbReference type="GO" id="GO:0046872">
    <property type="term" value="F:metal ion binding"/>
    <property type="evidence" value="ECO:0007669"/>
    <property type="project" value="UniProtKB-KW"/>
</dbReference>
<dbReference type="GO" id="GO:0004888">
    <property type="term" value="F:transmembrane signaling receptor activity"/>
    <property type="evidence" value="ECO:0007669"/>
    <property type="project" value="InterPro"/>
</dbReference>
<dbReference type="GO" id="GO:1904315">
    <property type="term" value="F:transmitter-gated monoatomic ion channel activity involved in regulation of postsynaptic membrane potential"/>
    <property type="evidence" value="ECO:0007669"/>
    <property type="project" value="Ensembl"/>
</dbReference>
<dbReference type="GO" id="GO:0071230">
    <property type="term" value="P:cellular response to amino acid stimulus"/>
    <property type="evidence" value="ECO:0000314"/>
    <property type="project" value="UniProtKB"/>
</dbReference>
<dbReference type="GO" id="GO:0071361">
    <property type="term" value="P:cellular response to ethanol"/>
    <property type="evidence" value="ECO:0000314"/>
    <property type="project" value="UniProtKB"/>
</dbReference>
<dbReference type="GO" id="GO:0071294">
    <property type="term" value="P:cellular response to zinc ion"/>
    <property type="evidence" value="ECO:0000314"/>
    <property type="project" value="UniProtKB"/>
</dbReference>
<dbReference type="GO" id="GO:1902476">
    <property type="term" value="P:chloride transmembrane transport"/>
    <property type="evidence" value="ECO:0000314"/>
    <property type="project" value="UniProtKB"/>
</dbReference>
<dbReference type="GO" id="GO:0050804">
    <property type="term" value="P:modulation of chemical synaptic transmission"/>
    <property type="evidence" value="ECO:0007669"/>
    <property type="project" value="Ensembl"/>
</dbReference>
<dbReference type="GO" id="GO:0034220">
    <property type="term" value="P:monoatomic ion transmembrane transport"/>
    <property type="evidence" value="ECO:0000314"/>
    <property type="project" value="UniProtKB"/>
</dbReference>
<dbReference type="GO" id="GO:0007218">
    <property type="term" value="P:neuropeptide signaling pathway"/>
    <property type="evidence" value="ECO:0000314"/>
    <property type="project" value="UniProtKB"/>
</dbReference>
<dbReference type="CDD" id="cd19009">
    <property type="entry name" value="LGIC_ECD_GlyR_alpha"/>
    <property type="match status" value="1"/>
</dbReference>
<dbReference type="CDD" id="cd19060">
    <property type="entry name" value="LGIC_TM_GlyR_alpha"/>
    <property type="match status" value="1"/>
</dbReference>
<dbReference type="FunFam" id="2.70.170.10:FF:000002">
    <property type="entry name" value="Glycine receptor alpha 1 subunit"/>
    <property type="match status" value="1"/>
</dbReference>
<dbReference type="FunFam" id="1.20.58.390:FF:000003">
    <property type="entry name" value="Glycine receptor alpha 2 subunit"/>
    <property type="match status" value="1"/>
</dbReference>
<dbReference type="Gene3D" id="2.70.170.10">
    <property type="entry name" value="Neurotransmitter-gated ion-channel ligand-binding domain"/>
    <property type="match status" value="1"/>
</dbReference>
<dbReference type="Gene3D" id="1.20.58.390">
    <property type="entry name" value="Neurotransmitter-gated ion-channel transmembrane domain"/>
    <property type="match status" value="1"/>
</dbReference>
<dbReference type="InterPro" id="IPR006028">
    <property type="entry name" value="GABAA/Glycine_rcpt"/>
</dbReference>
<dbReference type="InterPro" id="IPR008127">
    <property type="entry name" value="Glycine_rcpt_A"/>
</dbReference>
<dbReference type="InterPro" id="IPR008129">
    <property type="entry name" value="Glycine_rcpt_A2"/>
</dbReference>
<dbReference type="InterPro" id="IPR006202">
    <property type="entry name" value="Neur_chan_lig-bd"/>
</dbReference>
<dbReference type="InterPro" id="IPR036734">
    <property type="entry name" value="Neur_chan_lig-bd_sf"/>
</dbReference>
<dbReference type="InterPro" id="IPR006201">
    <property type="entry name" value="Neur_channel"/>
</dbReference>
<dbReference type="InterPro" id="IPR036719">
    <property type="entry name" value="Neuro-gated_channel_TM_sf"/>
</dbReference>
<dbReference type="InterPro" id="IPR038050">
    <property type="entry name" value="Neuro_actylchol_rec"/>
</dbReference>
<dbReference type="InterPro" id="IPR006029">
    <property type="entry name" value="Neurotrans-gated_channel_TM"/>
</dbReference>
<dbReference type="InterPro" id="IPR018000">
    <property type="entry name" value="Neurotransmitter_ion_chnl_CS"/>
</dbReference>
<dbReference type="NCBIfam" id="TIGR00860">
    <property type="entry name" value="LIC"/>
    <property type="match status" value="1"/>
</dbReference>
<dbReference type="PANTHER" id="PTHR18945">
    <property type="entry name" value="NEUROTRANSMITTER GATED ION CHANNEL"/>
    <property type="match status" value="1"/>
</dbReference>
<dbReference type="Pfam" id="PF02931">
    <property type="entry name" value="Neur_chan_LBD"/>
    <property type="match status" value="1"/>
</dbReference>
<dbReference type="Pfam" id="PF02932">
    <property type="entry name" value="Neur_chan_memb"/>
    <property type="match status" value="1"/>
</dbReference>
<dbReference type="PRINTS" id="PR00253">
    <property type="entry name" value="GABAARECEPTR"/>
</dbReference>
<dbReference type="PRINTS" id="PR01673">
    <property type="entry name" value="GLYRALPHA"/>
</dbReference>
<dbReference type="PRINTS" id="PR01675">
    <property type="entry name" value="GLYRALPHA2"/>
</dbReference>
<dbReference type="PRINTS" id="PR00252">
    <property type="entry name" value="NRIONCHANNEL"/>
</dbReference>
<dbReference type="SUPFAM" id="SSF90112">
    <property type="entry name" value="Neurotransmitter-gated ion-channel transmembrane pore"/>
    <property type="match status" value="1"/>
</dbReference>
<dbReference type="SUPFAM" id="SSF63712">
    <property type="entry name" value="Nicotinic receptor ligand binding domain-like"/>
    <property type="match status" value="1"/>
</dbReference>
<dbReference type="PROSITE" id="PS00236">
    <property type="entry name" value="NEUROTR_ION_CHANNEL"/>
    <property type="match status" value="1"/>
</dbReference>
<feature type="signal peptide" evidence="3">
    <location>
        <begin position="1"/>
        <end position="27"/>
    </location>
</feature>
<feature type="chain" id="PRO_0000000416" description="Glycine receptor subunit alpha-2">
    <location>
        <begin position="28"/>
        <end position="452"/>
    </location>
</feature>
<feature type="topological domain" description="Extracellular" evidence="1">
    <location>
        <begin position="28"/>
        <end position="256"/>
    </location>
</feature>
<feature type="transmembrane region" description="Helical; Name=1" evidence="1">
    <location>
        <begin position="257"/>
        <end position="278"/>
    </location>
</feature>
<feature type="topological domain" description="Cytoplasmic" evidence="1">
    <location>
        <begin position="279"/>
        <end position="283"/>
    </location>
</feature>
<feature type="transmembrane region" description="Helical; Name=2" evidence="1">
    <location>
        <begin position="284"/>
        <end position="304"/>
    </location>
</feature>
<feature type="topological domain" description="Extracellular" evidence="1">
    <location>
        <begin position="305"/>
        <end position="315"/>
    </location>
</feature>
<feature type="transmembrane region" description="Helical; Name=3" evidence="1">
    <location>
        <begin position="316"/>
        <end position="336"/>
    </location>
</feature>
<feature type="topological domain" description="Cytoplasmic" evidence="1">
    <location>
        <begin position="337"/>
        <end position="420"/>
    </location>
</feature>
<feature type="transmembrane region" description="Helical; Name=4" evidence="1">
    <location>
        <begin position="421"/>
        <end position="441"/>
    </location>
</feature>
<feature type="topological domain" description="Extracellular" evidence="1">
    <location>
        <begin position="442"/>
        <end position="452"/>
    </location>
</feature>
<feature type="binding site" description="in one chain" evidence="12 21">
    <location>
        <position position="99"/>
    </location>
    <ligand>
        <name>glycine</name>
        <dbReference type="ChEBI" id="CHEBI:57305"/>
        <label>1</label>
        <note>agonist; ligand shared between two adjacent GLRA2 subunits</note>
    </ligand>
</feature>
<feature type="binding site" evidence="12 21">
    <location>
        <position position="99"/>
    </location>
    <ligand>
        <name>glycine</name>
        <dbReference type="ChEBI" id="CHEBI:57305"/>
        <label>2</label>
        <note>agonist; ligand shared with an adjacent GLRB subunit</note>
    </ligand>
</feature>
<feature type="binding site" evidence="12 23">
    <location>
        <position position="99"/>
    </location>
    <ligand>
        <name>strychnine</name>
        <dbReference type="ChEBI" id="CHEBI:90700"/>
        <note>antagonist</note>
    </ligand>
</feature>
<feature type="binding site" description="in one chain" evidence="12 21">
    <location>
        <position position="163"/>
    </location>
    <ligand>
        <name>glycine</name>
        <dbReference type="ChEBI" id="CHEBI:57305"/>
        <label>1</label>
        <note>agonist; ligand shared between two adjacent GLRA2 subunits</note>
    </ligand>
</feature>
<feature type="binding site" evidence="12 21">
    <location>
        <position position="163"/>
    </location>
    <ligand>
        <name>glycine</name>
        <dbReference type="ChEBI" id="CHEBI:57305"/>
        <label>2</label>
        <note>agonist; ligand shared with an adjacent GLRB subunit</note>
    </ligand>
</feature>
<feature type="binding site" evidence="1">
    <location>
        <position position="226"/>
    </location>
    <ligand>
        <name>Zn(2+)</name>
        <dbReference type="ChEBI" id="CHEBI:29105"/>
    </ligand>
</feature>
<feature type="binding site" evidence="1">
    <location>
        <position position="228"/>
    </location>
    <ligand>
        <name>Zn(2+)</name>
        <dbReference type="ChEBI" id="CHEBI:29105"/>
    </ligand>
</feature>
<feature type="binding site" description="in other chain" evidence="12 21">
    <location>
        <position position="238"/>
    </location>
    <ligand>
        <name>glycine</name>
        <dbReference type="ChEBI" id="CHEBI:57305"/>
        <label>1</label>
        <note>agonist; ligand shared between two adjacent GLRA2 subunits</note>
    </ligand>
</feature>
<feature type="binding site" evidence="12 21">
    <location>
        <position position="238"/>
    </location>
    <ligand>
        <name>glycine</name>
        <dbReference type="ChEBI" id="CHEBI:57305"/>
        <label>3</label>
        <note>agonist; ligand shared with an adjacent GLRB subunit</note>
    </ligand>
</feature>
<feature type="binding site" evidence="1">
    <location>
        <position position="249"/>
    </location>
    <ligand>
        <name>Zn(2+)</name>
        <dbReference type="ChEBI" id="CHEBI:29105"/>
    </ligand>
</feature>
<feature type="site" description="Important for obstruction of the ion pore in the closed conformation" evidence="1">
    <location>
        <position position="295"/>
    </location>
</feature>
<feature type="glycosylation site" description="N-linked (GlcNAc...) asparagine" evidence="3">
    <location>
        <position position="72"/>
    </location>
</feature>
<feature type="glycosylation site" description="N-linked (GlcNAc...) asparagine" evidence="3">
    <location>
        <position position="103"/>
    </location>
</feature>
<feature type="disulfide bond" evidence="12 21 22 23 24">
    <location>
        <begin position="172"/>
        <end position="186"/>
    </location>
</feature>
<feature type="disulfide bond" evidence="12 21 22 23 24">
    <location>
        <begin position="232"/>
        <end position="243"/>
    </location>
</feature>
<feature type="splice variant" id="VSP_045465" description="In isoform 3." evidence="14">
    <location>
        <begin position="1"/>
        <end position="89"/>
    </location>
</feature>
<feature type="splice variant" id="VSP_000082" description="In isoform Alpha-2B." evidence="14 15 16">
    <original>VT</original>
    <variation>IA</variation>
    <location>
        <begin position="85"/>
        <end position="86"/>
    </location>
</feature>
<feature type="sequence variant" id="VAR_087062" description="In MRXSP; uncertain significance; dbSNP:rs2146999184." evidence="13">
    <original>F</original>
    <variation>S</variation>
    <location>
        <position position="47"/>
    </location>
</feature>
<feature type="sequence variant" id="VAR_087063" description="In MRXSP; mutant channels show severely decreased sensitivity to glycine and are unable to respond to physiological glycine levels; results in reduced protein expression; reduced localization to the cell membrane; dbSNP:rs1276905604." evidence="10">
    <original>N</original>
    <variation>S</variation>
    <location>
        <position position="136"/>
    </location>
</feature>
<feature type="sequence variant" id="VAR_087064" description="In MRXSP; fails to rescue abnormal outgrowth of spinal motor neuron axons in zebrafish morphants; mutant channels show severely decreased sensitivity to glycine and are unable to respond to physiological glycine levels; results in reduced protein expression; reduced localization to the cell membrane; dbSNP:rs2147065620." evidence="10">
    <original>R</original>
    <variation>Q</variation>
    <location>
        <position position="153"/>
    </location>
</feature>
<feature type="sequence variant" id="VAR_087065" description="In MRXSP; uncertain significance; dbSNP:rs748764171." evidence="13">
    <original>R</original>
    <variation>C</variation>
    <location>
        <position position="252"/>
    </location>
</feature>
<feature type="sequence variant" id="VAR_087066" description="In MRXSP; uncertain significance; dbSNP:rs2147096455." evidence="13">
    <original>I</original>
    <variation>M</variation>
    <location>
        <position position="259"/>
    </location>
</feature>
<feature type="sequence variant" id="VAR_087067" description="In MRXSP; uncertain significance; dbSNP:rs2090371373." evidence="13">
    <original>A</original>
    <variation>T</variation>
    <location>
        <position position="288"/>
    </location>
</feature>
<feature type="sequence variant" id="VAR_087068" description="In MRXSP; dbSNP:rs1601761445." evidence="13">
    <original>T</original>
    <variation>M</variation>
    <location>
        <position position="296"/>
    </location>
</feature>
<feature type="sequence variant" id="VAR_087069" description="In MRXSP; affects channel activity; results in slower channel closing and increased conductance consistent with a gain-of-function effect; results in prolonged inhibitory post-synaptic currents; dbSNP:rs761094724." evidence="6 11">
    <original>R</original>
    <variation>L</variation>
    <location>
        <position position="350"/>
    </location>
</feature>
<feature type="sequence variant" id="VAR_087070" description="In MRXSP; uncertain significance; dbSNP:rs368138282." evidence="13">
    <original>P</original>
    <variation>T</variation>
    <location>
        <position position="396"/>
    </location>
</feature>
<feature type="sequence variant" id="VAR_087071" description="In MRXSP; uncertain significance; dbSNP:rs370575329." evidence="13">
    <original>P</original>
    <variation>L</variation>
    <location>
        <position position="400"/>
    </location>
</feature>
<feature type="sequence variant" id="VAR_087072" description="In MRXSP; uncertain significance; dbSNP:rs768735440." evidence="13">
    <original>R</original>
    <variation>Q</variation>
    <location>
        <position position="445"/>
    </location>
</feature>
<feature type="mutagenesis site" description="No effect on the kinetics of inhibitory post-synaptic currents." evidence="11">
    <original>R</original>
    <variation>A</variation>
    <variation>K</variation>
    <variation>I</variation>
    <location>
        <position position="350"/>
    </location>
</feature>
<feature type="sequence conflict" description="In Ref. 5; BAH12541." evidence="17" ref="5">
    <original>V</original>
    <variation>A</variation>
    <location>
        <position position="389"/>
    </location>
</feature>